<organism>
    <name type="scientific">Rickettsia africae (strain ESF-5)</name>
    <dbReference type="NCBI Taxonomy" id="347255"/>
    <lineage>
        <taxon>Bacteria</taxon>
        <taxon>Pseudomonadati</taxon>
        <taxon>Pseudomonadota</taxon>
        <taxon>Alphaproteobacteria</taxon>
        <taxon>Rickettsiales</taxon>
        <taxon>Rickettsiaceae</taxon>
        <taxon>Rickettsieae</taxon>
        <taxon>Rickettsia</taxon>
        <taxon>spotted fever group</taxon>
    </lineage>
</organism>
<dbReference type="EMBL" id="CP001612">
    <property type="protein sequence ID" value="ACP53108.1"/>
    <property type="molecule type" value="Genomic_DNA"/>
</dbReference>
<dbReference type="RefSeq" id="WP_012719393.1">
    <property type="nucleotide sequence ID" value="NC_012633.1"/>
</dbReference>
<dbReference type="SMR" id="C3PME8"/>
<dbReference type="KEGG" id="raf:RAF_ORF0141"/>
<dbReference type="HOGENOM" id="CLU_103507_1_0_5"/>
<dbReference type="Proteomes" id="UP000002305">
    <property type="component" value="Chromosome"/>
</dbReference>
<dbReference type="GO" id="GO:0022625">
    <property type="term" value="C:cytosolic large ribosomal subunit"/>
    <property type="evidence" value="ECO:0007669"/>
    <property type="project" value="TreeGrafter"/>
</dbReference>
<dbReference type="GO" id="GO:0003735">
    <property type="term" value="F:structural constituent of ribosome"/>
    <property type="evidence" value="ECO:0007669"/>
    <property type="project" value="InterPro"/>
</dbReference>
<dbReference type="GO" id="GO:0006412">
    <property type="term" value="P:translation"/>
    <property type="evidence" value="ECO:0007669"/>
    <property type="project" value="UniProtKB-UniRule"/>
</dbReference>
<dbReference type="Gene3D" id="2.30.30.790">
    <property type="match status" value="1"/>
</dbReference>
<dbReference type="HAMAP" id="MF_00402">
    <property type="entry name" value="Ribosomal_bL19"/>
    <property type="match status" value="1"/>
</dbReference>
<dbReference type="InterPro" id="IPR001857">
    <property type="entry name" value="Ribosomal_bL19"/>
</dbReference>
<dbReference type="InterPro" id="IPR038657">
    <property type="entry name" value="Ribosomal_bL19_sf"/>
</dbReference>
<dbReference type="InterPro" id="IPR008991">
    <property type="entry name" value="Translation_prot_SH3-like_sf"/>
</dbReference>
<dbReference type="NCBIfam" id="TIGR01024">
    <property type="entry name" value="rplS_bact"/>
    <property type="match status" value="1"/>
</dbReference>
<dbReference type="PANTHER" id="PTHR15680:SF9">
    <property type="entry name" value="LARGE RIBOSOMAL SUBUNIT PROTEIN BL19M"/>
    <property type="match status" value="1"/>
</dbReference>
<dbReference type="PANTHER" id="PTHR15680">
    <property type="entry name" value="RIBOSOMAL PROTEIN L19"/>
    <property type="match status" value="1"/>
</dbReference>
<dbReference type="Pfam" id="PF01245">
    <property type="entry name" value="Ribosomal_L19"/>
    <property type="match status" value="1"/>
</dbReference>
<dbReference type="PIRSF" id="PIRSF002191">
    <property type="entry name" value="Ribosomal_L19"/>
    <property type="match status" value="1"/>
</dbReference>
<dbReference type="PRINTS" id="PR00061">
    <property type="entry name" value="RIBOSOMALL19"/>
</dbReference>
<dbReference type="SUPFAM" id="SSF50104">
    <property type="entry name" value="Translation proteins SH3-like domain"/>
    <property type="match status" value="1"/>
</dbReference>
<sequence>MNIIDRFEQENISKRTANKKIPDFEAGDTVKVTVKIIDRSIEKDGKEKLTERFQAYEGVVIAKRNRGITSSFLVRKISHGEGVERRFMTYSPIVHSIDVVKYGVVCRAKLYYLRNRSGKSARIKERHIPIAKTKAAKA</sequence>
<protein>
    <recommendedName>
        <fullName evidence="1">Large ribosomal subunit protein bL19</fullName>
    </recommendedName>
    <alternativeName>
        <fullName evidence="2">50S ribosomal protein L19</fullName>
    </alternativeName>
</protein>
<reference key="1">
    <citation type="journal article" date="2009" name="BMC Genomics">
        <title>Analysis of the Rickettsia africae genome reveals that virulence acquisition in Rickettsia species may be explained by genome reduction.</title>
        <authorList>
            <person name="Fournier P.-E."/>
            <person name="El Karkouri K."/>
            <person name="Leroy Q."/>
            <person name="Robert C."/>
            <person name="Giumelli B."/>
            <person name="Renesto P."/>
            <person name="Socolovschi C."/>
            <person name="Parola P."/>
            <person name="Audic S."/>
            <person name="Raoult D."/>
        </authorList>
    </citation>
    <scope>NUCLEOTIDE SEQUENCE [LARGE SCALE GENOMIC DNA]</scope>
    <source>
        <strain>ESF-5</strain>
    </source>
</reference>
<accession>C3PME8</accession>
<gene>
    <name evidence="1" type="primary">rplS</name>
    <name type="ordered locus">RAF_ORF0141</name>
</gene>
<name>RL19_RICAE</name>
<evidence type="ECO:0000255" key="1">
    <source>
        <dbReference type="HAMAP-Rule" id="MF_00402"/>
    </source>
</evidence>
<evidence type="ECO:0000305" key="2"/>
<comment type="function">
    <text evidence="1">This protein is located at the 30S-50S ribosomal subunit interface and may play a role in the structure and function of the aminoacyl-tRNA binding site.</text>
</comment>
<comment type="similarity">
    <text evidence="1">Belongs to the bacterial ribosomal protein bL19 family.</text>
</comment>
<proteinExistence type="inferred from homology"/>
<feature type="chain" id="PRO_1000205900" description="Large ribosomal subunit protein bL19">
    <location>
        <begin position="1"/>
        <end position="138"/>
    </location>
</feature>
<keyword id="KW-0687">Ribonucleoprotein</keyword>
<keyword id="KW-0689">Ribosomal protein</keyword>